<organism>
    <name type="scientific">Pseudomonas fluorescens (strain Pf0-1)</name>
    <dbReference type="NCBI Taxonomy" id="205922"/>
    <lineage>
        <taxon>Bacteria</taxon>
        <taxon>Pseudomonadati</taxon>
        <taxon>Pseudomonadota</taxon>
        <taxon>Gammaproteobacteria</taxon>
        <taxon>Pseudomonadales</taxon>
        <taxon>Pseudomonadaceae</taxon>
        <taxon>Pseudomonas</taxon>
    </lineage>
</organism>
<reference key="1">
    <citation type="journal article" date="2009" name="Genome Biol.">
        <title>Genomic and genetic analyses of diversity and plant interactions of Pseudomonas fluorescens.</title>
        <authorList>
            <person name="Silby M.W."/>
            <person name="Cerdeno-Tarraga A.M."/>
            <person name="Vernikos G.S."/>
            <person name="Giddens S.R."/>
            <person name="Jackson R.W."/>
            <person name="Preston G.M."/>
            <person name="Zhang X.-X."/>
            <person name="Moon C.D."/>
            <person name="Gehrig S.M."/>
            <person name="Godfrey S.A.C."/>
            <person name="Knight C.G."/>
            <person name="Malone J.G."/>
            <person name="Robinson Z."/>
            <person name="Spiers A.J."/>
            <person name="Harris S."/>
            <person name="Challis G.L."/>
            <person name="Yaxley A.M."/>
            <person name="Harris D."/>
            <person name="Seeger K."/>
            <person name="Murphy L."/>
            <person name="Rutter S."/>
            <person name="Squares R."/>
            <person name="Quail M.A."/>
            <person name="Saunders E."/>
            <person name="Mavromatis K."/>
            <person name="Brettin T.S."/>
            <person name="Bentley S.D."/>
            <person name="Hothersall J."/>
            <person name="Stephens E."/>
            <person name="Thomas C.M."/>
            <person name="Parkhill J."/>
            <person name="Levy S.B."/>
            <person name="Rainey P.B."/>
            <person name="Thomson N.R."/>
        </authorList>
    </citation>
    <scope>NUCLEOTIDE SEQUENCE [LARGE SCALE GENOMIC DNA]</scope>
    <source>
        <strain>Pf0-1</strain>
    </source>
</reference>
<dbReference type="EC" id="2.8.4.3" evidence="1"/>
<dbReference type="EMBL" id="CP000094">
    <property type="protein sequence ID" value="ABA76687.1"/>
    <property type="molecule type" value="Genomic_DNA"/>
</dbReference>
<dbReference type="RefSeq" id="WP_011336083.1">
    <property type="nucleotide sequence ID" value="NC_007492.2"/>
</dbReference>
<dbReference type="SMR" id="Q3K6B7"/>
<dbReference type="KEGG" id="pfo:Pfl01_4950"/>
<dbReference type="eggNOG" id="COG0621">
    <property type="taxonomic scope" value="Bacteria"/>
</dbReference>
<dbReference type="HOGENOM" id="CLU_018697_2_0_6"/>
<dbReference type="Proteomes" id="UP000002704">
    <property type="component" value="Chromosome"/>
</dbReference>
<dbReference type="GO" id="GO:0005829">
    <property type="term" value="C:cytosol"/>
    <property type="evidence" value="ECO:0007669"/>
    <property type="project" value="TreeGrafter"/>
</dbReference>
<dbReference type="GO" id="GO:0051539">
    <property type="term" value="F:4 iron, 4 sulfur cluster binding"/>
    <property type="evidence" value="ECO:0007669"/>
    <property type="project" value="UniProtKB-UniRule"/>
</dbReference>
<dbReference type="GO" id="GO:0046872">
    <property type="term" value="F:metal ion binding"/>
    <property type="evidence" value="ECO:0007669"/>
    <property type="project" value="UniProtKB-KW"/>
</dbReference>
<dbReference type="GO" id="GO:0035597">
    <property type="term" value="F:N6-isopentenyladenosine methylthiotransferase activity"/>
    <property type="evidence" value="ECO:0007669"/>
    <property type="project" value="TreeGrafter"/>
</dbReference>
<dbReference type="CDD" id="cd01335">
    <property type="entry name" value="Radical_SAM"/>
    <property type="match status" value="1"/>
</dbReference>
<dbReference type="FunFam" id="3.40.50.12160:FF:000001">
    <property type="entry name" value="tRNA-2-methylthio-N(6)-dimethylallyladenosine synthase"/>
    <property type="match status" value="1"/>
</dbReference>
<dbReference type="FunFam" id="3.80.30.20:FF:000001">
    <property type="entry name" value="tRNA-2-methylthio-N(6)-dimethylallyladenosine synthase 2"/>
    <property type="match status" value="1"/>
</dbReference>
<dbReference type="Gene3D" id="3.40.50.12160">
    <property type="entry name" value="Methylthiotransferase, N-terminal domain"/>
    <property type="match status" value="1"/>
</dbReference>
<dbReference type="Gene3D" id="3.80.30.20">
    <property type="entry name" value="tm_1862 like domain"/>
    <property type="match status" value="1"/>
</dbReference>
<dbReference type="HAMAP" id="MF_01864">
    <property type="entry name" value="tRNA_metthiotr_MiaB"/>
    <property type="match status" value="1"/>
</dbReference>
<dbReference type="InterPro" id="IPR006638">
    <property type="entry name" value="Elp3/MiaA/NifB-like_rSAM"/>
</dbReference>
<dbReference type="InterPro" id="IPR005839">
    <property type="entry name" value="Methylthiotransferase"/>
</dbReference>
<dbReference type="InterPro" id="IPR020612">
    <property type="entry name" value="Methylthiotransferase_CS"/>
</dbReference>
<dbReference type="InterPro" id="IPR013848">
    <property type="entry name" value="Methylthiotransferase_N"/>
</dbReference>
<dbReference type="InterPro" id="IPR038135">
    <property type="entry name" value="Methylthiotransferase_N_sf"/>
</dbReference>
<dbReference type="InterPro" id="IPR006463">
    <property type="entry name" value="MiaB_methiolase"/>
</dbReference>
<dbReference type="InterPro" id="IPR007197">
    <property type="entry name" value="rSAM"/>
</dbReference>
<dbReference type="InterPro" id="IPR023404">
    <property type="entry name" value="rSAM_horseshoe"/>
</dbReference>
<dbReference type="InterPro" id="IPR002792">
    <property type="entry name" value="TRAM_dom"/>
</dbReference>
<dbReference type="NCBIfam" id="TIGR01574">
    <property type="entry name" value="miaB-methiolase"/>
    <property type="match status" value="1"/>
</dbReference>
<dbReference type="NCBIfam" id="TIGR00089">
    <property type="entry name" value="MiaB/RimO family radical SAM methylthiotransferase"/>
    <property type="match status" value="1"/>
</dbReference>
<dbReference type="PANTHER" id="PTHR43020">
    <property type="entry name" value="CDK5 REGULATORY SUBUNIT-ASSOCIATED PROTEIN 1"/>
    <property type="match status" value="1"/>
</dbReference>
<dbReference type="PANTHER" id="PTHR43020:SF2">
    <property type="entry name" value="MITOCHONDRIAL TRNA METHYLTHIOTRANSFERASE CDK5RAP1"/>
    <property type="match status" value="1"/>
</dbReference>
<dbReference type="Pfam" id="PF04055">
    <property type="entry name" value="Radical_SAM"/>
    <property type="match status" value="1"/>
</dbReference>
<dbReference type="Pfam" id="PF01938">
    <property type="entry name" value="TRAM"/>
    <property type="match status" value="1"/>
</dbReference>
<dbReference type="Pfam" id="PF00919">
    <property type="entry name" value="UPF0004"/>
    <property type="match status" value="1"/>
</dbReference>
<dbReference type="SFLD" id="SFLDF00273">
    <property type="entry name" value="(dimethylallyl)adenosine_tRNA"/>
    <property type="match status" value="1"/>
</dbReference>
<dbReference type="SFLD" id="SFLDG01082">
    <property type="entry name" value="B12-binding_domain_containing"/>
    <property type="match status" value="1"/>
</dbReference>
<dbReference type="SFLD" id="SFLDG01061">
    <property type="entry name" value="methylthiotransferase"/>
    <property type="match status" value="1"/>
</dbReference>
<dbReference type="SMART" id="SM00729">
    <property type="entry name" value="Elp3"/>
    <property type="match status" value="1"/>
</dbReference>
<dbReference type="SUPFAM" id="SSF102114">
    <property type="entry name" value="Radical SAM enzymes"/>
    <property type="match status" value="1"/>
</dbReference>
<dbReference type="PROSITE" id="PS51449">
    <property type="entry name" value="MTTASE_N"/>
    <property type="match status" value="1"/>
</dbReference>
<dbReference type="PROSITE" id="PS01278">
    <property type="entry name" value="MTTASE_RADICAL"/>
    <property type="match status" value="1"/>
</dbReference>
<dbReference type="PROSITE" id="PS51918">
    <property type="entry name" value="RADICAL_SAM"/>
    <property type="match status" value="1"/>
</dbReference>
<dbReference type="PROSITE" id="PS50926">
    <property type="entry name" value="TRAM"/>
    <property type="match status" value="1"/>
</dbReference>
<comment type="function">
    <text evidence="1">Catalyzes the methylthiolation of N6-(dimethylallyl)adenosine (i(6)A), leading to the formation of 2-methylthio-N6-(dimethylallyl)adenosine (ms(2)i(6)A) at position 37 in tRNAs that read codons beginning with uridine.</text>
</comment>
<comment type="catalytic activity">
    <reaction evidence="1">
        <text>N(6)-dimethylallyladenosine(37) in tRNA + (sulfur carrier)-SH + AH2 + 2 S-adenosyl-L-methionine = 2-methylsulfanyl-N(6)-dimethylallyladenosine(37) in tRNA + (sulfur carrier)-H + 5'-deoxyadenosine + L-methionine + A + S-adenosyl-L-homocysteine + 2 H(+)</text>
        <dbReference type="Rhea" id="RHEA:37067"/>
        <dbReference type="Rhea" id="RHEA-COMP:10375"/>
        <dbReference type="Rhea" id="RHEA-COMP:10376"/>
        <dbReference type="Rhea" id="RHEA-COMP:14737"/>
        <dbReference type="Rhea" id="RHEA-COMP:14739"/>
        <dbReference type="ChEBI" id="CHEBI:13193"/>
        <dbReference type="ChEBI" id="CHEBI:15378"/>
        <dbReference type="ChEBI" id="CHEBI:17319"/>
        <dbReference type="ChEBI" id="CHEBI:17499"/>
        <dbReference type="ChEBI" id="CHEBI:29917"/>
        <dbReference type="ChEBI" id="CHEBI:57844"/>
        <dbReference type="ChEBI" id="CHEBI:57856"/>
        <dbReference type="ChEBI" id="CHEBI:59789"/>
        <dbReference type="ChEBI" id="CHEBI:64428"/>
        <dbReference type="ChEBI" id="CHEBI:74415"/>
        <dbReference type="ChEBI" id="CHEBI:74417"/>
        <dbReference type="EC" id="2.8.4.3"/>
    </reaction>
</comment>
<comment type="cofactor">
    <cofactor evidence="1">
        <name>[4Fe-4S] cluster</name>
        <dbReference type="ChEBI" id="CHEBI:49883"/>
    </cofactor>
    <text evidence="1">Binds 2 [4Fe-4S] clusters. One cluster is coordinated with 3 cysteines and an exchangeable S-adenosyl-L-methionine.</text>
</comment>
<comment type="subunit">
    <text evidence="1">Monomer.</text>
</comment>
<comment type="subcellular location">
    <subcellularLocation>
        <location evidence="1">Cytoplasm</location>
    </subcellularLocation>
</comment>
<comment type="similarity">
    <text evidence="1">Belongs to the methylthiotransferase family. MiaB subfamily.</text>
</comment>
<proteinExistence type="inferred from homology"/>
<gene>
    <name evidence="1" type="primary">miaB</name>
    <name type="ordered locus">Pfl01_4950</name>
</gene>
<keyword id="KW-0004">4Fe-4S</keyword>
<keyword id="KW-0963">Cytoplasm</keyword>
<keyword id="KW-0408">Iron</keyword>
<keyword id="KW-0411">Iron-sulfur</keyword>
<keyword id="KW-0479">Metal-binding</keyword>
<keyword id="KW-0949">S-adenosyl-L-methionine</keyword>
<keyword id="KW-0808">Transferase</keyword>
<keyword id="KW-0819">tRNA processing</keyword>
<protein>
    <recommendedName>
        <fullName evidence="1">tRNA-2-methylthio-N(6)-dimethylallyladenosine synthase</fullName>
        <ecNumber evidence="1">2.8.4.3</ecNumber>
    </recommendedName>
    <alternativeName>
        <fullName evidence="1">(Dimethylallyl)adenosine tRNA methylthiotransferase MiaB</fullName>
    </alternativeName>
    <alternativeName>
        <fullName evidence="1">tRNA-i(6)A37 methylthiotransferase</fullName>
    </alternativeName>
</protein>
<evidence type="ECO:0000255" key="1">
    <source>
        <dbReference type="HAMAP-Rule" id="MF_01864"/>
    </source>
</evidence>
<evidence type="ECO:0000255" key="2">
    <source>
        <dbReference type="PROSITE-ProRule" id="PRU01266"/>
    </source>
</evidence>
<accession>Q3K6B7</accession>
<feature type="chain" id="PRO_0000374465" description="tRNA-2-methylthio-N(6)-dimethylallyladenosine synthase">
    <location>
        <begin position="1"/>
        <end position="442"/>
    </location>
</feature>
<feature type="domain" description="MTTase N-terminal" evidence="1">
    <location>
        <begin position="3"/>
        <end position="120"/>
    </location>
</feature>
<feature type="domain" description="Radical SAM core" evidence="2">
    <location>
        <begin position="143"/>
        <end position="375"/>
    </location>
</feature>
<feature type="domain" description="TRAM" evidence="1">
    <location>
        <begin position="378"/>
        <end position="442"/>
    </location>
</feature>
<feature type="binding site" evidence="1">
    <location>
        <position position="12"/>
    </location>
    <ligand>
        <name>[4Fe-4S] cluster</name>
        <dbReference type="ChEBI" id="CHEBI:49883"/>
        <label>1</label>
    </ligand>
</feature>
<feature type="binding site" evidence="1">
    <location>
        <position position="49"/>
    </location>
    <ligand>
        <name>[4Fe-4S] cluster</name>
        <dbReference type="ChEBI" id="CHEBI:49883"/>
        <label>1</label>
    </ligand>
</feature>
<feature type="binding site" evidence="1">
    <location>
        <position position="83"/>
    </location>
    <ligand>
        <name>[4Fe-4S] cluster</name>
        <dbReference type="ChEBI" id="CHEBI:49883"/>
        <label>1</label>
    </ligand>
</feature>
<feature type="binding site" evidence="1">
    <location>
        <position position="157"/>
    </location>
    <ligand>
        <name>[4Fe-4S] cluster</name>
        <dbReference type="ChEBI" id="CHEBI:49883"/>
        <label>2</label>
        <note>4Fe-4S-S-AdoMet</note>
    </ligand>
</feature>
<feature type="binding site" evidence="1">
    <location>
        <position position="161"/>
    </location>
    <ligand>
        <name>[4Fe-4S] cluster</name>
        <dbReference type="ChEBI" id="CHEBI:49883"/>
        <label>2</label>
        <note>4Fe-4S-S-AdoMet</note>
    </ligand>
</feature>
<feature type="binding site" evidence="1">
    <location>
        <position position="164"/>
    </location>
    <ligand>
        <name>[4Fe-4S] cluster</name>
        <dbReference type="ChEBI" id="CHEBI:49883"/>
        <label>2</label>
        <note>4Fe-4S-S-AdoMet</note>
    </ligand>
</feature>
<name>MIAB_PSEPF</name>
<sequence length="442" mass="49395">MAKKLYIETHGCQMNEYDSSRMVDLLGEHQALEVTARAEDADVILLNTCSIRERAQDRVYSQLGRWRELKLANPDMVIAVGGCVASQEGAAIRDRAPYVDVVFGPQTLHRLPEMIDAARISKLPQVDVSFPEIEKFDHLPEPRIDGPSAYVSVMEGCSKYCTFCVVPYTRGEEVSRPFDDVIAEIIHLAENGVREVTLLGQNVNGYRGLTHDGRLADLAELIRVVAAVDGIDRIRYTTSHPLEFSDSLIQAHAEVPELVKHLHLPVQSGSDRILAAMKRNHTALEYKSKLRKLRAAVPGICISSDFIVGFPGETEKDFEQTMKLIADVGFDFSYSFVYSQRPGTPAADLADDTPEELKKERLNALQHRLNQQGFEISRQMVGSVQRILVTDYSKKDPGELQGRTENNRIVNFRCDNPTLIGQFADVHIDAAQPHSLRGSLIQ</sequence>